<keyword id="KW-0119">Carbohydrate metabolism</keyword>
<keyword id="KW-0325">Glycoprotein</keyword>
<keyword id="KW-0326">Glycosidase</keyword>
<keyword id="KW-0378">Hydrolase</keyword>
<keyword id="KW-0624">Polysaccharide degradation</keyword>
<keyword id="KW-1185">Reference proteome</keyword>
<keyword id="KW-0964">Secreted</keyword>
<keyword id="KW-0732">Signal</keyword>
<keyword id="KW-0858">Xylan degradation</keyword>
<organism>
    <name type="scientific">Neosartorya fischeri (strain ATCC 1020 / DSM 3700 / CBS 544.65 / FGSC A1164 / JCM 1740 / NRRL 181 / WB 181)</name>
    <name type="common">Aspergillus fischerianus</name>
    <dbReference type="NCBI Taxonomy" id="331117"/>
    <lineage>
        <taxon>Eukaryota</taxon>
        <taxon>Fungi</taxon>
        <taxon>Dikarya</taxon>
        <taxon>Ascomycota</taxon>
        <taxon>Pezizomycotina</taxon>
        <taxon>Eurotiomycetes</taxon>
        <taxon>Eurotiomycetidae</taxon>
        <taxon>Eurotiales</taxon>
        <taxon>Aspergillaceae</taxon>
        <taxon>Aspergillus</taxon>
        <taxon>Aspergillus subgen. Fumigati</taxon>
    </lineage>
</organism>
<dbReference type="EC" id="3.2.1.99"/>
<dbReference type="EMBL" id="DS027698">
    <property type="protein sequence ID" value="EAW15456.1"/>
    <property type="molecule type" value="Genomic_DNA"/>
</dbReference>
<dbReference type="RefSeq" id="XP_001257353.1">
    <property type="nucleotide sequence ID" value="XM_001257352.1"/>
</dbReference>
<dbReference type="SMR" id="A1DKY5"/>
<dbReference type="STRING" id="331117.A1DKY5"/>
<dbReference type="GlyCosmos" id="A1DKY5">
    <property type="glycosylation" value="3 sites, No reported glycans"/>
</dbReference>
<dbReference type="EnsemblFungi" id="EAW15456">
    <property type="protein sequence ID" value="EAW15456"/>
    <property type="gene ID" value="NFIA_047920"/>
</dbReference>
<dbReference type="GeneID" id="4583867"/>
<dbReference type="KEGG" id="nfi:NFIA_047920"/>
<dbReference type="VEuPathDB" id="FungiDB:NFIA_047920"/>
<dbReference type="eggNOG" id="ENOG502QTQG">
    <property type="taxonomic scope" value="Eukaryota"/>
</dbReference>
<dbReference type="HOGENOM" id="CLU_009397_5_0_1"/>
<dbReference type="OMA" id="EDYQFGW"/>
<dbReference type="OrthoDB" id="195678at2759"/>
<dbReference type="UniPathway" id="UPA00667"/>
<dbReference type="Proteomes" id="UP000006702">
    <property type="component" value="Unassembled WGS sequence"/>
</dbReference>
<dbReference type="GO" id="GO:0005576">
    <property type="term" value="C:extracellular region"/>
    <property type="evidence" value="ECO:0007669"/>
    <property type="project" value="UniProtKB-SubCell"/>
</dbReference>
<dbReference type="GO" id="GO:0046558">
    <property type="term" value="F:arabinan endo-1,5-alpha-L-arabinosidase activity"/>
    <property type="evidence" value="ECO:0007669"/>
    <property type="project" value="UniProtKB-EC"/>
</dbReference>
<dbReference type="GO" id="GO:0031222">
    <property type="term" value="P:arabinan catabolic process"/>
    <property type="evidence" value="ECO:0007669"/>
    <property type="project" value="UniProtKB-UniPathway"/>
</dbReference>
<dbReference type="GO" id="GO:0045493">
    <property type="term" value="P:xylan catabolic process"/>
    <property type="evidence" value="ECO:0007669"/>
    <property type="project" value="UniProtKB-KW"/>
</dbReference>
<dbReference type="CDD" id="cd18831">
    <property type="entry name" value="GH43_AnAbnA-like"/>
    <property type="match status" value="1"/>
</dbReference>
<dbReference type="Gene3D" id="2.115.10.20">
    <property type="entry name" value="Glycosyl hydrolase domain, family 43"/>
    <property type="match status" value="1"/>
</dbReference>
<dbReference type="InterPro" id="IPR050727">
    <property type="entry name" value="GH43_arabinanases"/>
</dbReference>
<dbReference type="InterPro" id="IPR006710">
    <property type="entry name" value="Glyco_hydro_43"/>
</dbReference>
<dbReference type="InterPro" id="IPR016840">
    <property type="entry name" value="Glyco_hydro_43_endo_a_Ara-ase"/>
</dbReference>
<dbReference type="InterPro" id="IPR023296">
    <property type="entry name" value="Glyco_hydro_beta-prop_sf"/>
</dbReference>
<dbReference type="PANTHER" id="PTHR43301">
    <property type="entry name" value="ARABINAN ENDO-1,5-ALPHA-L-ARABINOSIDASE"/>
    <property type="match status" value="1"/>
</dbReference>
<dbReference type="PANTHER" id="PTHR43301:SF7">
    <property type="entry name" value="ARABINAN ENDO-1,5-ALPHA-L-ARABINOSIDASE C"/>
    <property type="match status" value="1"/>
</dbReference>
<dbReference type="Pfam" id="PF04616">
    <property type="entry name" value="Glyco_hydro_43"/>
    <property type="match status" value="1"/>
</dbReference>
<dbReference type="PIRSF" id="PIRSF026534">
    <property type="entry name" value="Endo_alpha-L-arabinosidase"/>
    <property type="match status" value="1"/>
</dbReference>
<dbReference type="SUPFAM" id="SSF75005">
    <property type="entry name" value="Arabinanase/levansucrase/invertase"/>
    <property type="match status" value="1"/>
</dbReference>
<accession>A1DKY5</accession>
<gene>
    <name type="primary">abnC</name>
    <name type="ORF">NFIA_047920</name>
</gene>
<evidence type="ECO:0000250" key="1"/>
<evidence type="ECO:0000250" key="2">
    <source>
        <dbReference type="UniProtKB" id="P94522"/>
    </source>
</evidence>
<evidence type="ECO:0000255" key="3"/>
<evidence type="ECO:0000305" key="4"/>
<reference key="1">
    <citation type="journal article" date="2008" name="PLoS Genet.">
        <title>Genomic islands in the pathogenic filamentous fungus Aspergillus fumigatus.</title>
        <authorList>
            <person name="Fedorova N.D."/>
            <person name="Khaldi N."/>
            <person name="Joardar V.S."/>
            <person name="Maiti R."/>
            <person name="Amedeo P."/>
            <person name="Anderson M.J."/>
            <person name="Crabtree J."/>
            <person name="Silva J.C."/>
            <person name="Badger J.H."/>
            <person name="Albarraq A."/>
            <person name="Angiuoli S."/>
            <person name="Bussey H."/>
            <person name="Bowyer P."/>
            <person name="Cotty P.J."/>
            <person name="Dyer P.S."/>
            <person name="Egan A."/>
            <person name="Galens K."/>
            <person name="Fraser-Liggett C.M."/>
            <person name="Haas B.J."/>
            <person name="Inman J.M."/>
            <person name="Kent R."/>
            <person name="Lemieux S."/>
            <person name="Malavazi I."/>
            <person name="Orvis J."/>
            <person name="Roemer T."/>
            <person name="Ronning C.M."/>
            <person name="Sundaram J.P."/>
            <person name="Sutton G."/>
            <person name="Turner G."/>
            <person name="Venter J.C."/>
            <person name="White O.R."/>
            <person name="Whitty B.R."/>
            <person name="Youngman P."/>
            <person name="Wolfe K.H."/>
            <person name="Goldman G.H."/>
            <person name="Wortman J.R."/>
            <person name="Jiang B."/>
            <person name="Denning D.W."/>
            <person name="Nierman W.C."/>
        </authorList>
    </citation>
    <scope>NUCLEOTIDE SEQUENCE [LARGE SCALE GENOMIC DNA]</scope>
    <source>
        <strain>ATCC 1020 / DSM 3700 / CBS 544.65 / FGSC A1164 / JCM 1740 / NRRL 181 / WB 181</strain>
    </source>
</reference>
<sequence>MYLYTLILLFLASVNVNAYADPGACSGNCWTHDPGLYQRKSDGKYFRFATGGGIHIASADSLEGPWTDDGYVLPNGSIIDLNGKNNLWAPDLHYRDGTYYLYYAVSSLGSQNSAIGVATSKTMEAGSWTDHGTTGIESTPASPYNAIDANWIAVGGTQYANFGSYWNNLFQVEMTNGLKVKSGATPHQIAYNASGIHRQEAAFMFERNDYFYLTFSGGIALGYNDTWPAPGEEYFISVCRSTSATGGFVDKNGVSCLNSGGTLLLASHGFVYGPGGQGILKDSSKGFVLYYHYADTRIGKAVEDYQFGWNQLKWENDWPSV</sequence>
<protein>
    <recommendedName>
        <fullName>Probable arabinan endo-1,5-alpha-L-arabinosidase C</fullName>
        <ecNumber>3.2.1.99</ecNumber>
    </recommendedName>
    <alternativeName>
        <fullName>Endo-1,5-alpha-L-arabinanase C</fullName>
        <shortName>ABN C</shortName>
    </alternativeName>
</protein>
<proteinExistence type="inferred from homology"/>
<comment type="function">
    <text evidence="1">Endo-1,5-alpha-L-arabinanase involved in degradation of pectin. Its preferred substrate is linear 1,5-alpha-L-arabinan (By similarity).</text>
</comment>
<comment type="catalytic activity">
    <reaction>
        <text>Endohydrolysis of (1-&gt;5)-alpha-arabinofuranosidic linkages in (1-&gt;5)-arabinans.</text>
        <dbReference type="EC" id="3.2.1.99"/>
    </reaction>
</comment>
<comment type="pathway">
    <text>Glycan metabolism; L-arabinan degradation.</text>
</comment>
<comment type="subcellular location">
    <subcellularLocation>
        <location evidence="1">Secreted</location>
    </subcellularLocation>
</comment>
<comment type="similarity">
    <text evidence="4">Belongs to the glycosyl hydrolase 43 family.</text>
</comment>
<name>ABNC_NEOFI</name>
<feature type="signal peptide" evidence="3">
    <location>
        <begin position="1"/>
        <end position="20"/>
    </location>
</feature>
<feature type="chain" id="PRO_0000394639" description="Probable arabinan endo-1,5-alpha-L-arabinosidase C">
    <location>
        <begin position="21"/>
        <end position="321"/>
    </location>
</feature>
<feature type="active site" description="Proton acceptor" evidence="2">
    <location>
        <position position="33"/>
    </location>
</feature>
<feature type="active site" description="Proton donor" evidence="2">
    <location>
        <position position="200"/>
    </location>
</feature>
<feature type="site" description="Important for catalytic activity, responsible for pKa modulation of the active site Glu and correct orientation of both the proton donor and substrate" evidence="2">
    <location>
        <position position="148"/>
    </location>
</feature>
<feature type="glycosylation site" description="N-linked (GlcNAc...) asparagine" evidence="3">
    <location>
        <position position="75"/>
    </location>
</feature>
<feature type="glycosylation site" description="N-linked (GlcNAc...) asparagine" evidence="3">
    <location>
        <position position="192"/>
    </location>
</feature>
<feature type="glycosylation site" description="N-linked (GlcNAc...) asparagine" evidence="3">
    <location>
        <position position="224"/>
    </location>
</feature>